<evidence type="ECO:0000250" key="1">
    <source>
        <dbReference type="UniProtKB" id="P10906"/>
    </source>
</evidence>
<evidence type="ECO:0000255" key="2"/>
<evidence type="ECO:0000255" key="3">
    <source>
        <dbReference type="PROSITE-ProRule" id="PRU00441"/>
    </source>
</evidence>
<evidence type="ECO:0000305" key="4"/>
<name>UGPE_SALTI</name>
<comment type="function">
    <text evidence="1">Part of the ABC transporter complex UgpBAEC involved in sn-glycerol-3-phosphate (G3P) import. Probably responsible for the translocation of the substrate across the membrane.</text>
</comment>
<comment type="subunit">
    <text evidence="1">The complex is composed of two ATP-binding proteins (UgpC), two transmembrane proteins (UgpA and UgpE) and a solute-binding protein (UgpB).</text>
</comment>
<comment type="subcellular location">
    <subcellularLocation>
        <location evidence="1">Cell inner membrane</location>
        <topology evidence="2">Multi-pass membrane protein</topology>
    </subcellularLocation>
</comment>
<comment type="similarity">
    <text evidence="4">Belongs to the binding-protein-dependent transport system permease family. UgpAE subfamily.</text>
</comment>
<protein>
    <recommendedName>
        <fullName evidence="1">sn-glycerol-3-phosphate transport system permease protein UgpE</fullName>
    </recommendedName>
</protein>
<proteinExistence type="inferred from homology"/>
<accession>Q8Z246</accession>
<accession>Q7C5X9</accession>
<organism>
    <name type="scientific">Salmonella typhi</name>
    <dbReference type="NCBI Taxonomy" id="90370"/>
    <lineage>
        <taxon>Bacteria</taxon>
        <taxon>Pseudomonadati</taxon>
        <taxon>Pseudomonadota</taxon>
        <taxon>Gammaproteobacteria</taxon>
        <taxon>Enterobacterales</taxon>
        <taxon>Enterobacteriaceae</taxon>
        <taxon>Salmonella</taxon>
    </lineage>
</organism>
<feature type="chain" id="PRO_0000292683" description="sn-glycerol-3-phosphate transport system permease protein UgpE">
    <location>
        <begin position="1"/>
        <end position="281"/>
    </location>
</feature>
<feature type="transmembrane region" description="Helical" evidence="3">
    <location>
        <begin position="16"/>
        <end position="36"/>
    </location>
</feature>
<feature type="transmembrane region" description="Helical" evidence="3">
    <location>
        <begin position="85"/>
        <end position="105"/>
    </location>
</feature>
<feature type="transmembrane region" description="Helical" evidence="3">
    <location>
        <begin position="113"/>
        <end position="133"/>
    </location>
</feature>
<feature type="transmembrane region" description="Helical" evidence="3">
    <location>
        <begin position="142"/>
        <end position="162"/>
    </location>
</feature>
<feature type="transmembrane region" description="Helical" evidence="3">
    <location>
        <begin position="202"/>
        <end position="222"/>
    </location>
</feature>
<feature type="transmembrane region" description="Helical" evidence="3">
    <location>
        <begin position="247"/>
        <end position="267"/>
    </location>
</feature>
<feature type="domain" description="ABC transmembrane type-1" evidence="3">
    <location>
        <begin position="77"/>
        <end position="268"/>
    </location>
</feature>
<keyword id="KW-0997">Cell inner membrane</keyword>
<keyword id="KW-1003">Cell membrane</keyword>
<keyword id="KW-0472">Membrane</keyword>
<keyword id="KW-0812">Transmembrane</keyword>
<keyword id="KW-1133">Transmembrane helix</keyword>
<keyword id="KW-0813">Transport</keyword>
<sequence length="281" mass="31430">MIENRRGLTIFSHTMLILGIAVILFPLYVAFVAATLDDRAVFETPMTLLPGTQLLENIKTIWVNGVGVNSAPFWLMMLNSFIMAFSITVGKITVSMLSAFAIVWFRFPLRNLFFWMIFITLMLPVEVRIFPTVEVIANLKMLNSYAGLTLPLMASATATFLFRQFFMTLPDELVEAARIDGASPMRFFRDIVLPLSKTNLAALFVITFIYGWNQYLWPLLIITDVNLGTAVAGIKGMIATGEGTTQWNQVMAAMLLTLIPPVVIVLAMQRAFVRGLVDSEK</sequence>
<gene>
    <name type="primary">ugpE</name>
    <name type="ordered locus">STY4256</name>
    <name type="ordered locus">t3966</name>
</gene>
<dbReference type="EMBL" id="AE014613">
    <property type="protein sequence ID" value="AAO71436.1"/>
    <property type="molecule type" value="Genomic_DNA"/>
</dbReference>
<dbReference type="EMBL" id="AL513382">
    <property type="protein sequence ID" value="CAD08074.1"/>
    <property type="molecule type" value="Genomic_DNA"/>
</dbReference>
<dbReference type="RefSeq" id="NP_458364.1">
    <property type="nucleotide sequence ID" value="NC_003198.1"/>
</dbReference>
<dbReference type="RefSeq" id="WP_000572199.1">
    <property type="nucleotide sequence ID" value="NZ_WSUR01000001.1"/>
</dbReference>
<dbReference type="SMR" id="Q8Z246"/>
<dbReference type="STRING" id="220341.gene:17588087"/>
<dbReference type="KEGG" id="stt:t3966"/>
<dbReference type="KEGG" id="sty:STY4256"/>
<dbReference type="PATRIC" id="fig|220341.7.peg.4347"/>
<dbReference type="eggNOG" id="COG0395">
    <property type="taxonomic scope" value="Bacteria"/>
</dbReference>
<dbReference type="HOGENOM" id="CLU_016047_1_1_6"/>
<dbReference type="OMA" id="FIAWNDF"/>
<dbReference type="OrthoDB" id="369039at2"/>
<dbReference type="Proteomes" id="UP000000541">
    <property type="component" value="Chromosome"/>
</dbReference>
<dbReference type="Proteomes" id="UP000002670">
    <property type="component" value="Chromosome"/>
</dbReference>
<dbReference type="GO" id="GO:0005886">
    <property type="term" value="C:plasma membrane"/>
    <property type="evidence" value="ECO:0007669"/>
    <property type="project" value="UniProtKB-SubCell"/>
</dbReference>
<dbReference type="GO" id="GO:0055085">
    <property type="term" value="P:transmembrane transport"/>
    <property type="evidence" value="ECO:0007669"/>
    <property type="project" value="InterPro"/>
</dbReference>
<dbReference type="CDD" id="cd06261">
    <property type="entry name" value="TM_PBP2"/>
    <property type="match status" value="1"/>
</dbReference>
<dbReference type="FunFam" id="1.10.3720.10:FF:000042">
    <property type="entry name" value="sn-glycerol-3-phosphate transport system permease protein UgpE"/>
    <property type="match status" value="1"/>
</dbReference>
<dbReference type="Gene3D" id="1.10.3720.10">
    <property type="entry name" value="MetI-like"/>
    <property type="match status" value="1"/>
</dbReference>
<dbReference type="InterPro" id="IPR000515">
    <property type="entry name" value="MetI-like"/>
</dbReference>
<dbReference type="InterPro" id="IPR035906">
    <property type="entry name" value="MetI-like_sf"/>
</dbReference>
<dbReference type="NCBIfam" id="NF008210">
    <property type="entry name" value="PRK10973.1"/>
    <property type="match status" value="1"/>
</dbReference>
<dbReference type="PANTHER" id="PTHR43744">
    <property type="entry name" value="ABC TRANSPORTER PERMEASE PROTEIN MG189-RELATED-RELATED"/>
    <property type="match status" value="1"/>
</dbReference>
<dbReference type="PANTHER" id="PTHR43744:SF8">
    <property type="entry name" value="SN-GLYCEROL-3-PHOSPHATE TRANSPORT SYSTEM PERMEASE PROTEIN UGPE"/>
    <property type="match status" value="1"/>
</dbReference>
<dbReference type="Pfam" id="PF00528">
    <property type="entry name" value="BPD_transp_1"/>
    <property type="match status" value="1"/>
</dbReference>
<dbReference type="SUPFAM" id="SSF161098">
    <property type="entry name" value="MetI-like"/>
    <property type="match status" value="1"/>
</dbReference>
<dbReference type="PROSITE" id="PS50928">
    <property type="entry name" value="ABC_TM1"/>
    <property type="match status" value="1"/>
</dbReference>
<reference key="1">
    <citation type="journal article" date="2001" name="Nature">
        <title>Complete genome sequence of a multiple drug resistant Salmonella enterica serovar Typhi CT18.</title>
        <authorList>
            <person name="Parkhill J."/>
            <person name="Dougan G."/>
            <person name="James K.D."/>
            <person name="Thomson N.R."/>
            <person name="Pickard D."/>
            <person name="Wain J."/>
            <person name="Churcher C.M."/>
            <person name="Mungall K.L."/>
            <person name="Bentley S.D."/>
            <person name="Holden M.T.G."/>
            <person name="Sebaihia M."/>
            <person name="Baker S."/>
            <person name="Basham D."/>
            <person name="Brooks K."/>
            <person name="Chillingworth T."/>
            <person name="Connerton P."/>
            <person name="Cronin A."/>
            <person name="Davis P."/>
            <person name="Davies R.M."/>
            <person name="Dowd L."/>
            <person name="White N."/>
            <person name="Farrar J."/>
            <person name="Feltwell T."/>
            <person name="Hamlin N."/>
            <person name="Haque A."/>
            <person name="Hien T.T."/>
            <person name="Holroyd S."/>
            <person name="Jagels K."/>
            <person name="Krogh A."/>
            <person name="Larsen T.S."/>
            <person name="Leather S."/>
            <person name="Moule S."/>
            <person name="O'Gaora P."/>
            <person name="Parry C."/>
            <person name="Quail M.A."/>
            <person name="Rutherford K.M."/>
            <person name="Simmonds M."/>
            <person name="Skelton J."/>
            <person name="Stevens K."/>
            <person name="Whitehead S."/>
            <person name="Barrell B.G."/>
        </authorList>
    </citation>
    <scope>NUCLEOTIDE SEQUENCE [LARGE SCALE GENOMIC DNA]</scope>
    <source>
        <strain>CT18</strain>
    </source>
</reference>
<reference key="2">
    <citation type="journal article" date="2003" name="J. Bacteriol.">
        <title>Comparative genomics of Salmonella enterica serovar Typhi strains Ty2 and CT18.</title>
        <authorList>
            <person name="Deng W."/>
            <person name="Liou S.-R."/>
            <person name="Plunkett G. III"/>
            <person name="Mayhew G.F."/>
            <person name="Rose D.J."/>
            <person name="Burland V."/>
            <person name="Kodoyianni V."/>
            <person name="Schwartz D.C."/>
            <person name="Blattner F.R."/>
        </authorList>
    </citation>
    <scope>NUCLEOTIDE SEQUENCE [LARGE SCALE GENOMIC DNA]</scope>
    <source>
        <strain>ATCC 700931 / Ty2</strain>
    </source>
</reference>